<protein>
    <recommendedName>
        <fullName>NEDD4 family-interacting protein 1</fullName>
    </recommendedName>
</protein>
<accession>Q5U2S1</accession>
<evidence type="ECO:0000250" key="1"/>
<evidence type="ECO:0000250" key="2">
    <source>
        <dbReference type="UniProtKB" id="Q8R0W6"/>
    </source>
</evidence>
<evidence type="ECO:0000250" key="3">
    <source>
        <dbReference type="UniProtKB" id="Q9BT67"/>
    </source>
</evidence>
<evidence type="ECO:0000255" key="4"/>
<evidence type="ECO:0000256" key="5">
    <source>
        <dbReference type="SAM" id="MobiDB-lite"/>
    </source>
</evidence>
<evidence type="ECO:0000269" key="6">
    <source>
    </source>
</evidence>
<proteinExistence type="evidence at transcript level"/>
<dbReference type="EMBL" id="BC085887">
    <property type="protein sequence ID" value="AAH85887.1"/>
    <property type="molecule type" value="mRNA"/>
</dbReference>
<dbReference type="RefSeq" id="NP_001013077.1">
    <property type="nucleotide sequence ID" value="NM_001013059.1"/>
</dbReference>
<dbReference type="RefSeq" id="XP_006254695.1">
    <property type="nucleotide sequence ID" value="XM_006254633.5"/>
</dbReference>
<dbReference type="BioGRID" id="253573">
    <property type="interactions" value="2"/>
</dbReference>
<dbReference type="FunCoup" id="Q5U2S1">
    <property type="interactions" value="1920"/>
</dbReference>
<dbReference type="STRING" id="10116.ENSRNOP00000018499"/>
<dbReference type="iPTMnet" id="Q5U2S1"/>
<dbReference type="PhosphoSitePlus" id="Q5U2S1"/>
<dbReference type="PaxDb" id="10116-ENSRNOP00000018499"/>
<dbReference type="Ensembl" id="ENSRNOT00000018499.6">
    <property type="protein sequence ID" value="ENSRNOP00000018499.4"/>
    <property type="gene ID" value="ENSRNOG00000013562.6"/>
</dbReference>
<dbReference type="GeneID" id="291609"/>
<dbReference type="KEGG" id="rno:291609"/>
<dbReference type="UCSC" id="RGD:1310053">
    <property type="organism name" value="rat"/>
</dbReference>
<dbReference type="AGR" id="RGD:1310053"/>
<dbReference type="CTD" id="80762"/>
<dbReference type="RGD" id="1310053">
    <property type="gene designation" value="Ndfip1"/>
</dbReference>
<dbReference type="eggNOG" id="KOG4812">
    <property type="taxonomic scope" value="Eukaryota"/>
</dbReference>
<dbReference type="GeneTree" id="ENSGT00390000012721"/>
<dbReference type="HOGENOM" id="CLU_074980_2_0_1"/>
<dbReference type="InParanoid" id="Q5U2S1"/>
<dbReference type="OrthoDB" id="82025at9989"/>
<dbReference type="PhylomeDB" id="Q5U2S1"/>
<dbReference type="TreeFam" id="TF324911"/>
<dbReference type="PRO" id="PR:Q5U2S1"/>
<dbReference type="Proteomes" id="UP000002494">
    <property type="component" value="Chromosome 18"/>
</dbReference>
<dbReference type="Bgee" id="ENSRNOG00000013562">
    <property type="expression patterns" value="Expressed in Ammon's horn and 20 other cell types or tissues"/>
</dbReference>
<dbReference type="GO" id="GO:0005938">
    <property type="term" value="C:cell cortex"/>
    <property type="evidence" value="ECO:0000266"/>
    <property type="project" value="RGD"/>
</dbReference>
<dbReference type="GO" id="GO:0030425">
    <property type="term" value="C:dendrite"/>
    <property type="evidence" value="ECO:0007669"/>
    <property type="project" value="UniProtKB-SubCell"/>
</dbReference>
<dbReference type="GO" id="GO:0005783">
    <property type="term" value="C:endoplasmic reticulum"/>
    <property type="evidence" value="ECO:0000318"/>
    <property type="project" value="GO_Central"/>
</dbReference>
<dbReference type="GO" id="GO:0010008">
    <property type="term" value="C:endosome membrane"/>
    <property type="evidence" value="ECO:0007669"/>
    <property type="project" value="UniProtKB-SubCell"/>
</dbReference>
<dbReference type="GO" id="GO:0005576">
    <property type="term" value="C:extracellular region"/>
    <property type="evidence" value="ECO:0007669"/>
    <property type="project" value="UniProtKB-SubCell"/>
</dbReference>
<dbReference type="GO" id="GO:0005794">
    <property type="term" value="C:Golgi apparatus"/>
    <property type="evidence" value="ECO:0000266"/>
    <property type="project" value="RGD"/>
</dbReference>
<dbReference type="GO" id="GO:0000139">
    <property type="term" value="C:Golgi membrane"/>
    <property type="evidence" value="ECO:0007669"/>
    <property type="project" value="UniProtKB-SubCell"/>
</dbReference>
<dbReference type="GO" id="GO:0048471">
    <property type="term" value="C:perinuclear region of cytoplasm"/>
    <property type="evidence" value="ECO:0000266"/>
    <property type="project" value="RGD"/>
</dbReference>
<dbReference type="GO" id="GO:0045202">
    <property type="term" value="C:synapse"/>
    <property type="evidence" value="ECO:0007669"/>
    <property type="project" value="UniProtKB-SubCell"/>
</dbReference>
<dbReference type="GO" id="GO:0050699">
    <property type="term" value="F:WW domain binding"/>
    <property type="evidence" value="ECO:0000266"/>
    <property type="project" value="RGD"/>
</dbReference>
<dbReference type="GO" id="GO:0035739">
    <property type="term" value="P:CD4-positive, alpha-beta T cell proliferation"/>
    <property type="evidence" value="ECO:0000266"/>
    <property type="project" value="RGD"/>
</dbReference>
<dbReference type="GO" id="GO:0006879">
    <property type="term" value="P:intracellular iron ion homeostasis"/>
    <property type="evidence" value="ECO:0000266"/>
    <property type="project" value="RGD"/>
</dbReference>
<dbReference type="GO" id="GO:0030001">
    <property type="term" value="P:metal ion transport"/>
    <property type="evidence" value="ECO:0007669"/>
    <property type="project" value="InterPro"/>
</dbReference>
<dbReference type="GO" id="GO:2000562">
    <property type="term" value="P:negative regulation of CD4-positive, alpha-beta T cell proliferation"/>
    <property type="evidence" value="ECO:0000266"/>
    <property type="project" value="RGD"/>
</dbReference>
<dbReference type="GO" id="GO:0010629">
    <property type="term" value="P:negative regulation of gene expression"/>
    <property type="evidence" value="ECO:0000266"/>
    <property type="project" value="RGD"/>
</dbReference>
<dbReference type="GO" id="GO:0050728">
    <property type="term" value="P:negative regulation of inflammatory response"/>
    <property type="evidence" value="ECO:0000266"/>
    <property type="project" value="RGD"/>
</dbReference>
<dbReference type="GO" id="GO:0032713">
    <property type="term" value="P:negative regulation of interleukin-4 production"/>
    <property type="evidence" value="ECO:0000266"/>
    <property type="project" value="RGD"/>
</dbReference>
<dbReference type="GO" id="GO:0048294">
    <property type="term" value="P:negative regulation of isotype switching to IgE isotypes"/>
    <property type="evidence" value="ECO:0000266"/>
    <property type="project" value="RGD"/>
</dbReference>
<dbReference type="GO" id="GO:0051224">
    <property type="term" value="P:negative regulation of protein transport"/>
    <property type="evidence" value="ECO:0000266"/>
    <property type="project" value="RGD"/>
</dbReference>
<dbReference type="GO" id="GO:0002829">
    <property type="term" value="P:negative regulation of type 2 immune response"/>
    <property type="evidence" value="ECO:0000266"/>
    <property type="project" value="RGD"/>
</dbReference>
<dbReference type="GO" id="GO:0045732">
    <property type="term" value="P:positive regulation of protein catabolic process"/>
    <property type="evidence" value="ECO:0000266"/>
    <property type="project" value="RGD"/>
</dbReference>
<dbReference type="GO" id="GO:0031398">
    <property type="term" value="P:positive regulation of protein ubiquitination"/>
    <property type="evidence" value="ECO:0000250"/>
    <property type="project" value="UniProtKB"/>
</dbReference>
<dbReference type="GO" id="GO:0030163">
    <property type="term" value="P:protein catabolic process"/>
    <property type="evidence" value="ECO:0000266"/>
    <property type="project" value="RGD"/>
</dbReference>
<dbReference type="GO" id="GO:0048302">
    <property type="term" value="P:regulation of isotype switching to IgG isotypes"/>
    <property type="evidence" value="ECO:0000266"/>
    <property type="project" value="RGD"/>
</dbReference>
<dbReference type="GO" id="GO:0045619">
    <property type="term" value="P:regulation of lymphocyte differentiation"/>
    <property type="evidence" value="ECO:0000266"/>
    <property type="project" value="RGD"/>
</dbReference>
<dbReference type="GO" id="GO:0002761">
    <property type="term" value="P:regulation of myeloid leukocyte differentiation"/>
    <property type="evidence" value="ECO:0000266"/>
    <property type="project" value="RGD"/>
</dbReference>
<dbReference type="GO" id="GO:0006511">
    <property type="term" value="P:ubiquitin-dependent protein catabolic process"/>
    <property type="evidence" value="ECO:0000318"/>
    <property type="project" value="GO_Central"/>
</dbReference>
<dbReference type="GO" id="GO:0007034">
    <property type="term" value="P:vacuolar transport"/>
    <property type="evidence" value="ECO:0007669"/>
    <property type="project" value="InterPro"/>
</dbReference>
<dbReference type="CDD" id="cd22305">
    <property type="entry name" value="NDFIP1"/>
    <property type="match status" value="1"/>
</dbReference>
<dbReference type="InterPro" id="IPR019325">
    <property type="entry name" value="NEDD4/Bsd2"/>
</dbReference>
<dbReference type="PANTHER" id="PTHR13396">
    <property type="entry name" value="NEDD4 FAMILY INTERACTING PROTEIN 1/2"/>
    <property type="match status" value="1"/>
</dbReference>
<dbReference type="PANTHER" id="PTHR13396:SF3">
    <property type="entry name" value="NEDD4 FAMILY-INTERACTING PROTEIN 1"/>
    <property type="match status" value="1"/>
</dbReference>
<dbReference type="Pfam" id="PF10176">
    <property type="entry name" value="NEDD4_Bsd2"/>
    <property type="match status" value="2"/>
</dbReference>
<comment type="function">
    <text evidence="2 3">Activates HECT domain-containing E3 ubiquitin-protein ligases, including NEDD4 and ITCH, and consequently modulates the stability of their targets. As a result, controls many cellular processes. Prevents chronic T-helper cell-mediated inflammation by activating ITCH and thus controlling JUNB degradation. Promotes pancreatic beta cell death through degradation of JUNB and inhibition of the unfolded protein response, leading to reduction of insulin secretion. Restricts the production of pro-inflammatory cytokines in effector Th17 T-cells by promoting ITCH-mediated ubiquitination degradation of RORC. Together with NDFIP2, limits the cytokine signaling and expansion of effector Th2 T-cells by promoting degradation of JAK1, probably by ITCH- and NEDD4L-mediated ubiquitination. Regulates peripheral T-cell tolerance to self and foreign antigens, forcing the exit of naive CD4+ T-cells from the cell cycle before they become effector T-cells. Negatively regulates RLR-mediated antiviral response by promoting SMURF1-mediated ubiquitination and subsequent degradation of MAVS. Negatively regulates KCNH2 potassium channel activity by decreasing its cell-surface expression and interfering with channel maturation through recruitment of NEDD4L to the Golgi apparatus where it mediates KCNH2 degradation. In cortical neurons, mediates the ubiquitination of the divalent metal transporter SLC11A2/DMT1 by NEDD4L, leading to its down-regulation and protection of the cells from cobalt and iron toxicity. Important for normal development of dendrites and dendritic spines in cortex. Enhances the ubiquitination of BRAT1 mediated by: NEDD4, NEDD4L and ITCH and is required for the nuclear localization of ubiquitinated BRAT1. Enhances the ITCH-mediated ubiquitination of MAP3K7 by recruiting E2 ubiquitin-conjugating enzyme UBE2L3 to ITCH. Modulates EGFR signaling through multiple pathways. In particular, may regulate the ratio of AKT1-to-MAPK8 signaling in response to EGF, acting on AKT1 probably through PTEN destabilization and on MAPK8 through ITCH-dependent MAP2K4 inactivation. As a result, may control cell growth rate. Inhibits cell proliferation by promoting PTEN nuclear localization and changing its signaling specificity.</text>
</comment>
<comment type="subunit">
    <text evidence="2 3">Forms heterodimers with NDFIP2. Interacts with several E3 ubiquitin-protein ligases, including ITCH, NEDD4, NEDD4L and WWP2. The interaction with NEDD4, NEDD4L and ITCH leads to relocalization of these proteins to exosomes and eventually to exosomal secretion. Interacts with SR1402. Interacts with SLC11A2/DMT1. Interacts with PTEN. May interact with phosphorylated EGFR. Interacts with BRAT1. Interacts with KCNH2. Interacts with MAVS. Part of a complex containing ITCH, NDFIP1 and MAP3K7. Interacts (via N-terminus) with UBE2L3; the interaction mediates recruitment of UBE2L3 to ITCH.</text>
</comment>
<comment type="subcellular location">
    <subcellularLocation>
        <location evidence="3">Endosome membrane</location>
        <topology evidence="3">Multi-pass membrane protein</topology>
    </subcellularLocation>
    <subcellularLocation>
        <location evidence="3">Golgi apparatus membrane</location>
    </subcellularLocation>
    <subcellularLocation>
        <location evidence="2">Synapse</location>
        <location evidence="2">Synaptosome</location>
    </subcellularLocation>
    <subcellularLocation>
        <location evidence="6">Cell projection</location>
        <location evidence="6">Dendrite</location>
    </subcellularLocation>
    <subcellularLocation>
        <location evidence="3">Secreted</location>
    </subcellularLocation>
    <text evidence="3">Detected in exosomes and secreted via the exosomal pathway.</text>
</comment>
<comment type="domain">
    <text evidence="1">The PPxY motifs are required for E3 ubiquitin-protein ligase binding and activation and for ubiquitination.</text>
</comment>
<comment type="PTM">
    <text evidence="1">Ubiquitinated by NEDD4; mono-, di- and polyubiquitinated forms are detected. Ubiquitination regulates its degradation (By similarity).</text>
</comment>
<comment type="PTM">
    <text evidence="1">Undergoes transient tyrosine phosphorylation following EGF stimulation, most probably by catalyzed by SRC. Phosphorylation SRC is enhanced in the presence of NDFIP2 which may act as a scaffold to recruit SRC to NDFIP1 (By similarity).</text>
</comment>
<keyword id="KW-0007">Acetylation</keyword>
<keyword id="KW-0966">Cell projection</keyword>
<keyword id="KW-0967">Endosome</keyword>
<keyword id="KW-0333">Golgi apparatus</keyword>
<keyword id="KW-0472">Membrane</keyword>
<keyword id="KW-1185">Reference proteome</keyword>
<keyword id="KW-0677">Repeat</keyword>
<keyword id="KW-0964">Secreted</keyword>
<keyword id="KW-0770">Synapse</keyword>
<keyword id="KW-0771">Synaptosome</keyword>
<keyword id="KW-0812">Transmembrane</keyword>
<keyword id="KW-1133">Transmembrane helix</keyword>
<keyword id="KW-0832">Ubl conjugation</keyword>
<reference key="1">
    <citation type="journal article" date="2004" name="Genome Res.">
        <title>The status, quality, and expansion of the NIH full-length cDNA project: the Mammalian Gene Collection (MGC).</title>
        <authorList>
            <consortium name="The MGC Project Team"/>
        </authorList>
    </citation>
    <scope>NUCLEOTIDE SEQUENCE [LARGE SCALE MRNA]</scope>
    <source>
        <tissue>Heart</tissue>
    </source>
</reference>
<reference key="2">
    <citation type="journal article" date="2014" name="Cereb. Cortex">
        <title>Ndfip1 is required for the development of pyramidal neuron dendrites and spines in the neocortex.</title>
        <authorList>
            <person name="Hammond V.E."/>
            <person name="Gunnersen J.M."/>
            <person name="Goh C.P."/>
            <person name="Low L.H."/>
            <person name="Hyakumura T."/>
            <person name="Tang M.M."/>
            <person name="Britto J.M."/>
            <person name="Putz U."/>
            <person name="Howitt J.A."/>
            <person name="Tan S.S."/>
        </authorList>
    </citation>
    <scope>SUBCELLULAR LOCATION</scope>
</reference>
<feature type="initiator methionine" description="Removed" evidence="3">
    <location>
        <position position="1"/>
    </location>
</feature>
<feature type="chain" id="PRO_0000076271" description="NEDD4 family-interacting protein 1">
    <location>
        <begin position="2"/>
        <end position="221"/>
    </location>
</feature>
<feature type="topological domain" description="Cytoplasmic" evidence="4">
    <location>
        <begin position="2"/>
        <end position="116"/>
    </location>
</feature>
<feature type="transmembrane region" description="Helical" evidence="4">
    <location>
        <begin position="117"/>
        <end position="137"/>
    </location>
</feature>
<feature type="topological domain" description="Extracellular" evidence="4">
    <location>
        <begin position="138"/>
        <end position="143"/>
    </location>
</feature>
<feature type="transmembrane region" description="Helical" evidence="4">
    <location>
        <begin position="144"/>
        <end position="164"/>
    </location>
</feature>
<feature type="topological domain" description="Cytoplasmic" evidence="4">
    <location>
        <begin position="165"/>
        <end position="172"/>
    </location>
</feature>
<feature type="transmembrane region" description="Helical" evidence="4">
    <location>
        <begin position="173"/>
        <end position="193"/>
    </location>
</feature>
<feature type="topological domain" description="Extracellular" evidence="4">
    <location>
        <begin position="194"/>
        <end position="221"/>
    </location>
</feature>
<feature type="region of interest" description="Interaction with UBE2L3" evidence="2">
    <location>
        <begin position="2"/>
        <end position="41"/>
    </location>
</feature>
<feature type="region of interest" description="Disordered" evidence="5">
    <location>
        <begin position="15"/>
        <end position="45"/>
    </location>
</feature>
<feature type="region of interest" description="Interaction with ITCH" evidence="2">
    <location>
        <begin position="42"/>
        <end position="76"/>
    </location>
</feature>
<feature type="short sequence motif" description="PPxY motif 1">
    <location>
        <begin position="39"/>
        <end position="42"/>
    </location>
</feature>
<feature type="short sequence motif" description="PPxY motif 2">
    <location>
        <begin position="64"/>
        <end position="67"/>
    </location>
</feature>
<feature type="short sequence motif" description="PPxY motif 3">
    <location>
        <begin position="74"/>
        <end position="76"/>
    </location>
</feature>
<feature type="modified residue" description="N-acetylalanine" evidence="3">
    <location>
        <position position="2"/>
    </location>
</feature>
<name>NFIP1_RAT</name>
<gene>
    <name type="primary">Ndfip1</name>
    <name type="synonym">N4wbp5</name>
</gene>
<sequence length="221" mass="24913">MALALAALAAVEPACGTGYQQLQNEEEPGEREQTAGDAPPPYSSISAESAAYFDYKDESGFPKPPSYNVATTLPSYDEAERTKAEATIPLVPGRDEDFVGRDDFDDADQLRIGNDGIFMLTFFMAFLFNWIGFFLSFCLTTSAAGRYGAISGFGLSLIKWILIVRFSTYFPGYFDGQYWLWWVFLVLGFLLFLRGFINYAKVRKMPETFSNLPRTRVLFIY</sequence>
<organism>
    <name type="scientific">Rattus norvegicus</name>
    <name type="common">Rat</name>
    <dbReference type="NCBI Taxonomy" id="10116"/>
    <lineage>
        <taxon>Eukaryota</taxon>
        <taxon>Metazoa</taxon>
        <taxon>Chordata</taxon>
        <taxon>Craniata</taxon>
        <taxon>Vertebrata</taxon>
        <taxon>Euteleostomi</taxon>
        <taxon>Mammalia</taxon>
        <taxon>Eutheria</taxon>
        <taxon>Euarchontoglires</taxon>
        <taxon>Glires</taxon>
        <taxon>Rodentia</taxon>
        <taxon>Myomorpha</taxon>
        <taxon>Muroidea</taxon>
        <taxon>Muridae</taxon>
        <taxon>Murinae</taxon>
        <taxon>Rattus</taxon>
    </lineage>
</organism>